<dbReference type="EMBL" id="L27072">
    <property type="protein sequence ID" value="AAA28937.1"/>
    <property type="molecule type" value="mRNA"/>
</dbReference>
<dbReference type="EMBL" id="AE014298">
    <property type="protein sequence ID" value="AAF46019.1"/>
    <property type="molecule type" value="Genomic_DNA"/>
</dbReference>
<dbReference type="EMBL" id="AY118929">
    <property type="protein sequence ID" value="AAM50789.1"/>
    <property type="status" value="ALT_SEQ"/>
    <property type="molecule type" value="mRNA"/>
</dbReference>
<dbReference type="PIR" id="S47867">
    <property type="entry name" value="S47867"/>
</dbReference>
<dbReference type="RefSeq" id="NP_001284882.1">
    <property type="nucleotide sequence ID" value="NM_001297953.1"/>
</dbReference>
<dbReference type="RefSeq" id="NP_511046.1">
    <property type="nucleotide sequence ID" value="NM_078491.3"/>
</dbReference>
<dbReference type="PDB" id="6ZMU">
    <property type="method" value="X-ray"/>
    <property type="resolution" value="1.95 A"/>
    <property type="chains" value="A/B/C/D=1-107"/>
</dbReference>
<dbReference type="PDBsum" id="6ZMU"/>
<dbReference type="SMR" id="P47938"/>
<dbReference type="BioGRID" id="57954">
    <property type="interactions" value="19"/>
</dbReference>
<dbReference type="DIP" id="DIP-21555N"/>
<dbReference type="FunCoup" id="P47938">
    <property type="interactions" value="367"/>
</dbReference>
<dbReference type="IntAct" id="P47938">
    <property type="interactions" value="1"/>
</dbReference>
<dbReference type="STRING" id="7227.FBpp0311766"/>
<dbReference type="GlyGen" id="P47938">
    <property type="glycosylation" value="1 site, 1 O-linked glycan (1 site)"/>
</dbReference>
<dbReference type="PaxDb" id="7227-FBpp0070717"/>
<dbReference type="DNASU" id="31444"/>
<dbReference type="EnsemblMetazoa" id="FBtr0070749">
    <property type="protein sequence ID" value="FBpp0070717"/>
    <property type="gene ID" value="FBgn0011761"/>
</dbReference>
<dbReference type="EnsemblMetazoa" id="FBtr0345745">
    <property type="protein sequence ID" value="FBpp0311766"/>
    <property type="gene ID" value="FBgn0011761"/>
</dbReference>
<dbReference type="GeneID" id="31444"/>
<dbReference type="KEGG" id="dme:Dmel_CG4193"/>
<dbReference type="UCSC" id="CG4193-RA">
    <property type="organism name" value="d. melanogaster"/>
</dbReference>
<dbReference type="AGR" id="FB:FBgn0011761"/>
<dbReference type="CTD" id="31444"/>
<dbReference type="FlyBase" id="FBgn0011761">
    <property type="gene designation" value="dhd"/>
</dbReference>
<dbReference type="VEuPathDB" id="VectorBase:FBgn0011761"/>
<dbReference type="eggNOG" id="KOG0907">
    <property type="taxonomic scope" value="Eukaryota"/>
</dbReference>
<dbReference type="HOGENOM" id="CLU_090389_14_1_1"/>
<dbReference type="InParanoid" id="P47938"/>
<dbReference type="OMA" id="STWHETH"/>
<dbReference type="OrthoDB" id="2121326at2759"/>
<dbReference type="PhylomeDB" id="P47938"/>
<dbReference type="SignaLink" id="P47938"/>
<dbReference type="BioGRID-ORCS" id="31444">
    <property type="hits" value="0 hits in 1 CRISPR screen"/>
</dbReference>
<dbReference type="GenomeRNAi" id="31444"/>
<dbReference type="PRO" id="PR:P47938"/>
<dbReference type="Proteomes" id="UP000000803">
    <property type="component" value="Chromosome X"/>
</dbReference>
<dbReference type="Bgee" id="FBgn0011761">
    <property type="expression patterns" value="Expressed in egg chamber and 83 other cell types or tissues"/>
</dbReference>
<dbReference type="ExpressionAtlas" id="P47938">
    <property type="expression patterns" value="baseline and differential"/>
</dbReference>
<dbReference type="GO" id="GO:0005829">
    <property type="term" value="C:cytosol"/>
    <property type="evidence" value="ECO:0000314"/>
    <property type="project" value="FlyBase"/>
</dbReference>
<dbReference type="GO" id="GO:0005634">
    <property type="term" value="C:nucleus"/>
    <property type="evidence" value="ECO:0000314"/>
    <property type="project" value="FlyBase"/>
</dbReference>
<dbReference type="GO" id="GO:0015038">
    <property type="term" value="F:glutathione disulfide oxidoreductase activity"/>
    <property type="evidence" value="ECO:0000314"/>
    <property type="project" value="FlyBase"/>
</dbReference>
<dbReference type="GO" id="GO:0015035">
    <property type="term" value="F:protein-disulfide reductase activity"/>
    <property type="evidence" value="ECO:0000314"/>
    <property type="project" value="FlyBase"/>
</dbReference>
<dbReference type="GO" id="GO:0007143">
    <property type="term" value="P:female meiotic nuclear division"/>
    <property type="evidence" value="ECO:0000315"/>
    <property type="project" value="FlyBase"/>
</dbReference>
<dbReference type="GO" id="GO:0060322">
    <property type="term" value="P:head development"/>
    <property type="evidence" value="ECO:0000315"/>
    <property type="project" value="FlyBase"/>
</dbReference>
<dbReference type="GO" id="GO:0035041">
    <property type="term" value="P:sperm DNA decondensation"/>
    <property type="evidence" value="ECO:0000315"/>
    <property type="project" value="FlyBase"/>
</dbReference>
<dbReference type="CDD" id="cd02947">
    <property type="entry name" value="TRX_family"/>
    <property type="match status" value="1"/>
</dbReference>
<dbReference type="FunFam" id="3.40.30.10:FF:000359">
    <property type="entry name" value="Thioredoxin"/>
    <property type="match status" value="1"/>
</dbReference>
<dbReference type="Gene3D" id="3.40.30.10">
    <property type="entry name" value="Glutaredoxin"/>
    <property type="match status" value="1"/>
</dbReference>
<dbReference type="InterPro" id="IPR005746">
    <property type="entry name" value="Thioredoxin"/>
</dbReference>
<dbReference type="InterPro" id="IPR036249">
    <property type="entry name" value="Thioredoxin-like_sf"/>
</dbReference>
<dbReference type="InterPro" id="IPR017937">
    <property type="entry name" value="Thioredoxin_CS"/>
</dbReference>
<dbReference type="InterPro" id="IPR013766">
    <property type="entry name" value="Thioredoxin_domain"/>
</dbReference>
<dbReference type="PANTHER" id="PTHR46115">
    <property type="entry name" value="THIOREDOXIN-LIKE PROTEIN 1"/>
    <property type="match status" value="1"/>
</dbReference>
<dbReference type="Pfam" id="PF00085">
    <property type="entry name" value="Thioredoxin"/>
    <property type="match status" value="1"/>
</dbReference>
<dbReference type="PIRSF" id="PIRSF000077">
    <property type="entry name" value="Thioredoxin"/>
    <property type="match status" value="1"/>
</dbReference>
<dbReference type="PRINTS" id="PR00421">
    <property type="entry name" value="THIOREDOXIN"/>
</dbReference>
<dbReference type="SUPFAM" id="SSF52833">
    <property type="entry name" value="Thioredoxin-like"/>
    <property type="match status" value="1"/>
</dbReference>
<dbReference type="PROSITE" id="PS00194">
    <property type="entry name" value="THIOREDOXIN_1"/>
    <property type="match status" value="1"/>
</dbReference>
<dbReference type="PROSITE" id="PS51352">
    <property type="entry name" value="THIOREDOXIN_2"/>
    <property type="match status" value="1"/>
</dbReference>
<reference key="1">
    <citation type="journal article" date="1994" name="Genetics">
        <title>The Drosophila maternal effect locus deadhead encodes a thioredoxin homolog required for female meiosis and early embryonic development.</title>
        <authorList>
            <person name="Salz H.K."/>
            <person name="Flickinger T.W."/>
            <person name="Mittendorf E."/>
            <person name="Pellicena-Palle A."/>
            <person name="Petschek J.P."/>
            <person name="Albrecht E.B."/>
        </authorList>
    </citation>
    <scope>NUCLEOTIDE SEQUENCE [MRNA]</scope>
    <source>
        <tissue>Ovary</tissue>
    </source>
</reference>
<reference key="2">
    <citation type="journal article" date="2000" name="Science">
        <title>The genome sequence of Drosophila melanogaster.</title>
        <authorList>
            <person name="Adams M.D."/>
            <person name="Celniker S.E."/>
            <person name="Holt R.A."/>
            <person name="Evans C.A."/>
            <person name="Gocayne J.D."/>
            <person name="Amanatides P.G."/>
            <person name="Scherer S.E."/>
            <person name="Li P.W."/>
            <person name="Hoskins R.A."/>
            <person name="Galle R.F."/>
            <person name="George R.A."/>
            <person name="Lewis S.E."/>
            <person name="Richards S."/>
            <person name="Ashburner M."/>
            <person name="Henderson S.N."/>
            <person name="Sutton G.G."/>
            <person name="Wortman J.R."/>
            <person name="Yandell M.D."/>
            <person name="Zhang Q."/>
            <person name="Chen L.X."/>
            <person name="Brandon R.C."/>
            <person name="Rogers Y.-H.C."/>
            <person name="Blazej R.G."/>
            <person name="Champe M."/>
            <person name="Pfeiffer B.D."/>
            <person name="Wan K.H."/>
            <person name="Doyle C."/>
            <person name="Baxter E.G."/>
            <person name="Helt G."/>
            <person name="Nelson C.R."/>
            <person name="Miklos G.L.G."/>
            <person name="Abril J.F."/>
            <person name="Agbayani A."/>
            <person name="An H.-J."/>
            <person name="Andrews-Pfannkoch C."/>
            <person name="Baldwin D."/>
            <person name="Ballew R.M."/>
            <person name="Basu A."/>
            <person name="Baxendale J."/>
            <person name="Bayraktaroglu L."/>
            <person name="Beasley E.M."/>
            <person name="Beeson K.Y."/>
            <person name="Benos P.V."/>
            <person name="Berman B.P."/>
            <person name="Bhandari D."/>
            <person name="Bolshakov S."/>
            <person name="Borkova D."/>
            <person name="Botchan M.R."/>
            <person name="Bouck J."/>
            <person name="Brokstein P."/>
            <person name="Brottier P."/>
            <person name="Burtis K.C."/>
            <person name="Busam D.A."/>
            <person name="Butler H."/>
            <person name="Cadieu E."/>
            <person name="Center A."/>
            <person name="Chandra I."/>
            <person name="Cherry J.M."/>
            <person name="Cawley S."/>
            <person name="Dahlke C."/>
            <person name="Davenport L.B."/>
            <person name="Davies P."/>
            <person name="de Pablos B."/>
            <person name="Delcher A."/>
            <person name="Deng Z."/>
            <person name="Mays A.D."/>
            <person name="Dew I."/>
            <person name="Dietz S.M."/>
            <person name="Dodson K."/>
            <person name="Doup L.E."/>
            <person name="Downes M."/>
            <person name="Dugan-Rocha S."/>
            <person name="Dunkov B.C."/>
            <person name="Dunn P."/>
            <person name="Durbin K.J."/>
            <person name="Evangelista C.C."/>
            <person name="Ferraz C."/>
            <person name="Ferriera S."/>
            <person name="Fleischmann W."/>
            <person name="Fosler C."/>
            <person name="Gabrielian A.E."/>
            <person name="Garg N.S."/>
            <person name="Gelbart W.M."/>
            <person name="Glasser K."/>
            <person name="Glodek A."/>
            <person name="Gong F."/>
            <person name="Gorrell J.H."/>
            <person name="Gu Z."/>
            <person name="Guan P."/>
            <person name="Harris M."/>
            <person name="Harris N.L."/>
            <person name="Harvey D.A."/>
            <person name="Heiman T.J."/>
            <person name="Hernandez J.R."/>
            <person name="Houck J."/>
            <person name="Hostin D."/>
            <person name="Houston K.A."/>
            <person name="Howland T.J."/>
            <person name="Wei M.-H."/>
            <person name="Ibegwam C."/>
            <person name="Jalali M."/>
            <person name="Kalush F."/>
            <person name="Karpen G.H."/>
            <person name="Ke Z."/>
            <person name="Kennison J.A."/>
            <person name="Ketchum K.A."/>
            <person name="Kimmel B.E."/>
            <person name="Kodira C.D."/>
            <person name="Kraft C.L."/>
            <person name="Kravitz S."/>
            <person name="Kulp D."/>
            <person name="Lai Z."/>
            <person name="Lasko P."/>
            <person name="Lei Y."/>
            <person name="Levitsky A.A."/>
            <person name="Li J.H."/>
            <person name="Li Z."/>
            <person name="Liang Y."/>
            <person name="Lin X."/>
            <person name="Liu X."/>
            <person name="Mattei B."/>
            <person name="McIntosh T.C."/>
            <person name="McLeod M.P."/>
            <person name="McPherson D."/>
            <person name="Merkulov G."/>
            <person name="Milshina N.V."/>
            <person name="Mobarry C."/>
            <person name="Morris J."/>
            <person name="Moshrefi A."/>
            <person name="Mount S.M."/>
            <person name="Moy M."/>
            <person name="Murphy B."/>
            <person name="Murphy L."/>
            <person name="Muzny D.M."/>
            <person name="Nelson D.L."/>
            <person name="Nelson D.R."/>
            <person name="Nelson K.A."/>
            <person name="Nixon K."/>
            <person name="Nusskern D.R."/>
            <person name="Pacleb J.M."/>
            <person name="Palazzolo M."/>
            <person name="Pittman G.S."/>
            <person name="Pan S."/>
            <person name="Pollard J."/>
            <person name="Puri V."/>
            <person name="Reese M.G."/>
            <person name="Reinert K."/>
            <person name="Remington K."/>
            <person name="Saunders R.D.C."/>
            <person name="Scheeler F."/>
            <person name="Shen H."/>
            <person name="Shue B.C."/>
            <person name="Siden-Kiamos I."/>
            <person name="Simpson M."/>
            <person name="Skupski M.P."/>
            <person name="Smith T.J."/>
            <person name="Spier E."/>
            <person name="Spradling A.C."/>
            <person name="Stapleton M."/>
            <person name="Strong R."/>
            <person name="Sun E."/>
            <person name="Svirskas R."/>
            <person name="Tector C."/>
            <person name="Turner R."/>
            <person name="Venter E."/>
            <person name="Wang A.H."/>
            <person name="Wang X."/>
            <person name="Wang Z.-Y."/>
            <person name="Wassarman D.A."/>
            <person name="Weinstock G.M."/>
            <person name="Weissenbach J."/>
            <person name="Williams S.M."/>
            <person name="Woodage T."/>
            <person name="Worley K.C."/>
            <person name="Wu D."/>
            <person name="Yang S."/>
            <person name="Yao Q.A."/>
            <person name="Ye J."/>
            <person name="Yeh R.-F."/>
            <person name="Zaveri J.S."/>
            <person name="Zhan M."/>
            <person name="Zhang G."/>
            <person name="Zhao Q."/>
            <person name="Zheng L."/>
            <person name="Zheng X.H."/>
            <person name="Zhong F.N."/>
            <person name="Zhong W."/>
            <person name="Zhou X."/>
            <person name="Zhu S.C."/>
            <person name="Zhu X."/>
            <person name="Smith H.O."/>
            <person name="Gibbs R.A."/>
            <person name="Myers E.W."/>
            <person name="Rubin G.M."/>
            <person name="Venter J.C."/>
        </authorList>
    </citation>
    <scope>NUCLEOTIDE SEQUENCE [LARGE SCALE GENOMIC DNA]</scope>
    <source>
        <strain>Berkeley</strain>
    </source>
</reference>
<reference key="3">
    <citation type="journal article" date="2002" name="Genome Biol.">
        <title>Annotation of the Drosophila melanogaster euchromatic genome: a systematic review.</title>
        <authorList>
            <person name="Misra S."/>
            <person name="Crosby M.A."/>
            <person name="Mungall C.J."/>
            <person name="Matthews B.B."/>
            <person name="Campbell K.S."/>
            <person name="Hradecky P."/>
            <person name="Huang Y."/>
            <person name="Kaminker J.S."/>
            <person name="Millburn G.H."/>
            <person name="Prochnik S.E."/>
            <person name="Smith C.D."/>
            <person name="Tupy J.L."/>
            <person name="Whitfield E.J."/>
            <person name="Bayraktaroglu L."/>
            <person name="Berman B.P."/>
            <person name="Bettencourt B.R."/>
            <person name="Celniker S.E."/>
            <person name="de Grey A.D.N.J."/>
            <person name="Drysdale R.A."/>
            <person name="Harris N.L."/>
            <person name="Richter J."/>
            <person name="Russo S."/>
            <person name="Schroeder A.J."/>
            <person name="Shu S.Q."/>
            <person name="Stapleton M."/>
            <person name="Yamada C."/>
            <person name="Ashburner M."/>
            <person name="Gelbart W.M."/>
            <person name="Rubin G.M."/>
            <person name="Lewis S.E."/>
        </authorList>
    </citation>
    <scope>GENOME REANNOTATION</scope>
    <source>
        <strain>Berkeley</strain>
    </source>
</reference>
<reference key="4">
    <citation type="journal article" date="2002" name="Genome Biol.">
        <title>A Drosophila full-length cDNA resource.</title>
        <authorList>
            <person name="Stapleton M."/>
            <person name="Carlson J.W."/>
            <person name="Brokstein P."/>
            <person name="Yu C."/>
            <person name="Champe M."/>
            <person name="George R.A."/>
            <person name="Guarin H."/>
            <person name="Kronmiller B."/>
            <person name="Pacleb J.M."/>
            <person name="Park S."/>
            <person name="Wan K.H."/>
            <person name="Rubin G.M."/>
            <person name="Celniker S.E."/>
        </authorList>
    </citation>
    <scope>NUCLEOTIDE SEQUENCE [LARGE SCALE MRNA]</scope>
    <source>
        <strain>Berkeley</strain>
        <tissue>Embryo</tissue>
    </source>
</reference>
<reference key="5">
    <citation type="journal article" date="1997" name="Mech. Dev.">
        <title>The function of the Drosophila thioredoxin homologue encoded by the deadhead gene is redox-dependent and blocks the initiation of development but not DNA synthesis.</title>
        <authorList>
            <person name="Pellicena-Palle A."/>
            <person name="Stitzinger S.M."/>
            <person name="Salz H.K."/>
        </authorList>
    </citation>
    <scope>FUNCTION</scope>
    <scope>DEVELOPMENTAL STAGE</scope>
    <scope>DISULFIDE BOND</scope>
    <scope>MUTAGENESIS OF CYS-31 AND CYS-34</scope>
</reference>
<reference key="6">
    <citation type="journal article" date="2002" name="J. Biol. Chem.">
        <title>Thioredoxin-2 but not thioredoxin-1 is a substrate of thioredoxin peroxidase-1 from Drosophila melanogaster: isolation and characterization of a second thioredoxin in D.melanogaster and evidence for distinct biological functions of Trx-1 and Trx-2.</title>
        <authorList>
            <person name="Bauer H."/>
            <person name="Kanzok S.M."/>
            <person name="Schirmer R.H."/>
        </authorList>
    </citation>
    <scope>FUNCTION</scope>
</reference>
<reference key="7">
    <citation type="journal article" date="2003" name="Chromosoma">
        <title>The ThioredoxinT and deadhead gene pair encode testis- and ovary-specific thioredoxins in Drosophila melanogaster.</title>
        <authorList>
            <person name="Svensson M.J."/>
            <person name="Chen J.D."/>
            <person name="Pirrotta V."/>
            <person name="Larsson J."/>
        </authorList>
    </citation>
    <scope>SUBCELLULAR LOCATION</scope>
    <scope>TISSUE SPECIFICITY</scope>
</reference>
<gene>
    <name type="primary">dhd</name>
    <name type="synonym">Trx-1</name>
    <name type="ORF">CG4193</name>
</gene>
<name>THIO1_DROME</name>
<sequence length="107" mass="12384">MASVRTMNDYHKRIEAADDKLIVLDFYATWCGPCKEMESTVKSLARKYSSKAVVLKIDVDKFEELTERYKVRSMPTFVFLRQNRRLASFAGADEHKLTNMMAKLVKA</sequence>
<accession>P47938</accession>
<accession>Q8MSC0</accession>
<accession>Q9W4D5</accession>
<feature type="chain" id="PRO_0000120032" description="Thioredoxin-1">
    <location>
        <begin position="1"/>
        <end position="107"/>
    </location>
</feature>
<feature type="domain" description="Thioredoxin" evidence="2">
    <location>
        <begin position="2"/>
        <end position="106"/>
    </location>
</feature>
<feature type="active site" description="Nucleophile">
    <location>
        <position position="31"/>
    </location>
</feature>
<feature type="active site" description="Nucleophile">
    <location>
        <position position="34"/>
    </location>
</feature>
<feature type="site" description="Deprotonates C-terminal active site Cys" evidence="1">
    <location>
        <position position="25"/>
    </location>
</feature>
<feature type="site" description="Contributes to redox potential value">
    <location>
        <position position="32"/>
    </location>
</feature>
<feature type="site" description="Contributes to redox potential value">
    <location>
        <position position="33"/>
    </location>
</feature>
<feature type="disulfide bond" description="Redox-active" evidence="2 5">
    <location>
        <begin position="31"/>
        <end position="34"/>
    </location>
</feature>
<feature type="mutagenesis site" description="Loss of function." evidence="5">
    <original>C</original>
    <variation>S</variation>
    <location>
        <position position="31"/>
    </location>
</feature>
<feature type="mutagenesis site" description="Loss of function." evidence="5">
    <original>C</original>
    <variation>S</variation>
    <location>
        <position position="34"/>
    </location>
</feature>
<feature type="helix" evidence="7">
    <location>
        <begin position="7"/>
        <end position="16"/>
    </location>
</feature>
<feature type="turn" evidence="7">
    <location>
        <begin position="17"/>
        <end position="19"/>
    </location>
</feature>
<feature type="strand" evidence="7">
    <location>
        <begin position="20"/>
        <end position="27"/>
    </location>
</feature>
<feature type="helix" evidence="7">
    <location>
        <begin position="32"/>
        <end position="47"/>
    </location>
</feature>
<feature type="turn" evidence="7">
    <location>
        <begin position="48"/>
        <end position="51"/>
    </location>
</feature>
<feature type="strand" evidence="7">
    <location>
        <begin position="52"/>
        <end position="58"/>
    </location>
</feature>
<feature type="turn" evidence="7">
    <location>
        <begin position="59"/>
        <end position="61"/>
    </location>
</feature>
<feature type="helix" evidence="7">
    <location>
        <begin position="63"/>
        <end position="68"/>
    </location>
</feature>
<feature type="strand" evidence="7">
    <location>
        <begin position="73"/>
        <end position="81"/>
    </location>
</feature>
<feature type="strand" evidence="7">
    <location>
        <begin position="84"/>
        <end position="92"/>
    </location>
</feature>
<feature type="helix" evidence="7">
    <location>
        <begin position="94"/>
        <end position="104"/>
    </location>
</feature>
<keyword id="KW-0002">3D-structure</keyword>
<keyword id="KW-1015">Disulfide bond</keyword>
<keyword id="KW-0249">Electron transport</keyword>
<keyword id="KW-0539">Nucleus</keyword>
<keyword id="KW-0676">Redox-active center</keyword>
<keyword id="KW-1185">Reference proteome</keyword>
<keyword id="KW-0813">Transport</keyword>
<comment type="function">
    <text evidence="3 5">Participates in various redox reactions through the reversible oxidation of its active center dithiol to a disulfide and catalyzes dithiol-disulfide exchange reactions. As a reducing substrate of peroxiredoxin 1, thioredoxin 2 is preferred over thioredoxin 1. Required for female meiosis and early embryonic development.</text>
</comment>
<comment type="subcellular location">
    <subcellularLocation>
        <location evidence="4">Nucleus</location>
    </subcellularLocation>
</comment>
<comment type="tissue specificity">
    <text evidence="4">Ovary specific. Expressed present in the nurse cells from stage 9 of ovary development and is transported into the oocyte. Expressed throughout oogenesis.</text>
</comment>
<comment type="developmental stage">
    <text evidence="5">Expressed both maternally and zygotically.</text>
</comment>
<comment type="miscellaneous">
    <text>The TrxT gene, which encodes an testis specific thioredoxin, is adjacent to the dhd gene and shares some regulatory region with it.</text>
</comment>
<comment type="similarity">
    <text evidence="6">Belongs to the thioredoxin family.</text>
</comment>
<protein>
    <recommendedName>
        <fullName>Thioredoxin-1</fullName>
        <shortName>DmTrx-1</shortName>
    </recommendedName>
    <alternativeName>
        <fullName>Protein deadhead</fullName>
    </alternativeName>
</protein>
<proteinExistence type="evidence at protein level"/>
<evidence type="ECO:0000250" key="1"/>
<evidence type="ECO:0000255" key="2">
    <source>
        <dbReference type="PROSITE-ProRule" id="PRU00691"/>
    </source>
</evidence>
<evidence type="ECO:0000269" key="3">
    <source>
    </source>
</evidence>
<evidence type="ECO:0000269" key="4">
    <source>
    </source>
</evidence>
<evidence type="ECO:0000269" key="5">
    <source>
    </source>
</evidence>
<evidence type="ECO:0000305" key="6"/>
<evidence type="ECO:0007829" key="7">
    <source>
        <dbReference type="PDB" id="6ZMU"/>
    </source>
</evidence>
<organism>
    <name type="scientific">Drosophila melanogaster</name>
    <name type="common">Fruit fly</name>
    <dbReference type="NCBI Taxonomy" id="7227"/>
    <lineage>
        <taxon>Eukaryota</taxon>
        <taxon>Metazoa</taxon>
        <taxon>Ecdysozoa</taxon>
        <taxon>Arthropoda</taxon>
        <taxon>Hexapoda</taxon>
        <taxon>Insecta</taxon>
        <taxon>Pterygota</taxon>
        <taxon>Neoptera</taxon>
        <taxon>Endopterygota</taxon>
        <taxon>Diptera</taxon>
        <taxon>Brachycera</taxon>
        <taxon>Muscomorpha</taxon>
        <taxon>Ephydroidea</taxon>
        <taxon>Drosophilidae</taxon>
        <taxon>Drosophila</taxon>
        <taxon>Sophophora</taxon>
    </lineage>
</organism>